<gene>
    <name type="primary">flgI</name>
    <name type="ordered locus">BB_0772</name>
</gene>
<comment type="function">
    <text evidence="1">Assembles around the rod to form the L-ring and probably protects the motor/basal body from shearing forces during rotation.</text>
</comment>
<comment type="subunit">
    <text evidence="1">The basal body constitutes a major portion of the flagellar organelle and consists of four rings (L,P,S, and M) mounted on a central rod.</text>
</comment>
<comment type="subcellular location">
    <subcellularLocation>
        <location evidence="1">Periplasm</location>
    </subcellularLocation>
    <subcellularLocation>
        <location evidence="1">Bacterial flagellum basal body</location>
    </subcellularLocation>
</comment>
<comment type="similarity">
    <text evidence="3">Belongs to the FlgI family.</text>
</comment>
<protein>
    <recommendedName>
        <fullName>Flagellar P-ring protein</fullName>
    </recommendedName>
    <alternativeName>
        <fullName>Basal body P-ring protein</fullName>
    </alternativeName>
</protein>
<sequence length="335" mass="36897">MNKLMLMLITFATSLLAQTNKASTGLKTDQSFNNSLSESVKLKEIADIYPTNTNFLTGIGIVAGLAGKGDSIKQKDLIIKILEENNIINEIGSNNIESKNIALVNVSLQVKGNTIKGSKHKACVASILDSKDLTNGILLKTNLKNKEGEIIAIASGITQPNNKLKGSGYTIDSVIINENQNINHSYNIILKKGNYTLINRIHKILTSKKINNKIKSDSTIEIEAKNISLLEEIENIKIETNPKILIDKKNGIILASENAKIGTFTFSIEKDNQNIFLSKNNKTTIQVNSMKLNEFILKNSNNLSNKELIQIIQAAQKINKLNGELILEEIDGNQN</sequence>
<keyword id="KW-0975">Bacterial flagellum</keyword>
<keyword id="KW-0574">Periplasm</keyword>
<keyword id="KW-1185">Reference proteome</keyword>
<keyword id="KW-0732">Signal</keyword>
<organism>
    <name type="scientific">Borreliella burgdorferi (strain ATCC 35210 / DSM 4680 / CIP 102532 / B31)</name>
    <name type="common">Borrelia burgdorferi</name>
    <dbReference type="NCBI Taxonomy" id="224326"/>
    <lineage>
        <taxon>Bacteria</taxon>
        <taxon>Pseudomonadati</taxon>
        <taxon>Spirochaetota</taxon>
        <taxon>Spirochaetia</taxon>
        <taxon>Spirochaetales</taxon>
        <taxon>Borreliaceae</taxon>
        <taxon>Borreliella</taxon>
    </lineage>
</organism>
<proteinExistence type="inferred from homology"/>
<feature type="signal peptide" evidence="2">
    <location>
        <begin position="1"/>
        <end position="17"/>
    </location>
</feature>
<feature type="chain" id="PRO_0000009494" description="Flagellar P-ring protein">
    <location>
        <begin position="18"/>
        <end position="335"/>
    </location>
</feature>
<evidence type="ECO:0000250" key="1"/>
<evidence type="ECO:0000255" key="2"/>
<evidence type="ECO:0000305" key="3"/>
<reference key="1">
    <citation type="journal article" date="1997" name="Nature">
        <title>Genomic sequence of a Lyme disease spirochaete, Borrelia burgdorferi.</title>
        <authorList>
            <person name="Fraser C.M."/>
            <person name="Casjens S."/>
            <person name="Huang W.M."/>
            <person name="Sutton G.G."/>
            <person name="Clayton R.A."/>
            <person name="Lathigra R."/>
            <person name="White O."/>
            <person name="Ketchum K.A."/>
            <person name="Dodson R.J."/>
            <person name="Hickey E.K."/>
            <person name="Gwinn M.L."/>
            <person name="Dougherty B.A."/>
            <person name="Tomb J.-F."/>
            <person name="Fleischmann R.D."/>
            <person name="Richardson D.L."/>
            <person name="Peterson J.D."/>
            <person name="Kerlavage A.R."/>
            <person name="Quackenbush J."/>
            <person name="Salzberg S.L."/>
            <person name="Hanson M."/>
            <person name="van Vugt R."/>
            <person name="Palmer N."/>
            <person name="Adams M.D."/>
            <person name="Gocayne J.D."/>
            <person name="Weidman J.F."/>
            <person name="Utterback T.R."/>
            <person name="Watthey L."/>
            <person name="McDonald L.A."/>
            <person name="Artiach P."/>
            <person name="Bowman C."/>
            <person name="Garland S.A."/>
            <person name="Fujii C."/>
            <person name="Cotton M.D."/>
            <person name="Horst K."/>
            <person name="Roberts K.M."/>
            <person name="Hatch B."/>
            <person name="Smith H.O."/>
            <person name="Venter J.C."/>
        </authorList>
    </citation>
    <scope>NUCLEOTIDE SEQUENCE [LARGE SCALE GENOMIC DNA]</scope>
    <source>
        <strain>ATCC 35210 / DSM 4680 / CIP 102532 / B31</strain>
    </source>
</reference>
<accession>O51713</accession>
<dbReference type="EMBL" id="AE000783">
    <property type="protein sequence ID" value="AAC67133.1"/>
    <property type="molecule type" value="Genomic_DNA"/>
</dbReference>
<dbReference type="PIR" id="C70196">
    <property type="entry name" value="C70196"/>
</dbReference>
<dbReference type="RefSeq" id="NP_212906.1">
    <property type="nucleotide sequence ID" value="NC_001318.1"/>
</dbReference>
<dbReference type="RefSeq" id="WP_010889818.1">
    <property type="nucleotide sequence ID" value="NC_001318.1"/>
</dbReference>
<dbReference type="SMR" id="O51713"/>
<dbReference type="STRING" id="224326.BB_0772"/>
<dbReference type="PaxDb" id="224326-BB_0772"/>
<dbReference type="EnsemblBacteria" id="AAC67133">
    <property type="protein sequence ID" value="AAC67133"/>
    <property type="gene ID" value="BB_0772"/>
</dbReference>
<dbReference type="KEGG" id="bbu:BB_0772"/>
<dbReference type="PATRIC" id="fig|224326.49.peg.1164"/>
<dbReference type="HOGENOM" id="CLU_838549_0_0_12"/>
<dbReference type="OrthoDB" id="350454at2"/>
<dbReference type="Proteomes" id="UP000001807">
    <property type="component" value="Chromosome"/>
</dbReference>
<dbReference type="GO" id="GO:0009428">
    <property type="term" value="C:bacterial-type flagellum basal body, distal rod, P ring"/>
    <property type="evidence" value="ECO:0007669"/>
    <property type="project" value="InterPro"/>
</dbReference>
<dbReference type="GO" id="GO:0030288">
    <property type="term" value="C:outer membrane-bounded periplasmic space"/>
    <property type="evidence" value="ECO:0007669"/>
    <property type="project" value="InterPro"/>
</dbReference>
<dbReference type="GO" id="GO:0005198">
    <property type="term" value="F:structural molecule activity"/>
    <property type="evidence" value="ECO:0007669"/>
    <property type="project" value="InterPro"/>
</dbReference>
<dbReference type="GO" id="GO:0071973">
    <property type="term" value="P:bacterial-type flagellum-dependent cell motility"/>
    <property type="evidence" value="ECO:0007669"/>
    <property type="project" value="InterPro"/>
</dbReference>
<dbReference type="HAMAP" id="MF_00416">
    <property type="entry name" value="FlgI"/>
    <property type="match status" value="1"/>
</dbReference>
<dbReference type="InterPro" id="IPR001782">
    <property type="entry name" value="Flag_FlgI"/>
</dbReference>
<dbReference type="NCBIfam" id="NF009348">
    <property type="entry name" value="PRK12706.1"/>
    <property type="match status" value="1"/>
</dbReference>
<dbReference type="PANTHER" id="PTHR30381">
    <property type="entry name" value="FLAGELLAR P-RING PERIPLASMIC PROTEIN FLGI"/>
    <property type="match status" value="1"/>
</dbReference>
<dbReference type="PANTHER" id="PTHR30381:SF0">
    <property type="entry name" value="FLAGELLAR P-RING PROTEIN"/>
    <property type="match status" value="1"/>
</dbReference>
<dbReference type="Pfam" id="PF02119">
    <property type="entry name" value="FlgI"/>
    <property type="match status" value="1"/>
</dbReference>
<dbReference type="PRINTS" id="PR01010">
    <property type="entry name" value="FLGPRINGFLGI"/>
</dbReference>
<name>FLGI_BORBU</name>